<dbReference type="EC" id="3.4.16.6"/>
<dbReference type="EMBL" id="DS231617">
    <property type="protein sequence ID" value="EDU46676.1"/>
    <property type="molecule type" value="Genomic_DNA"/>
</dbReference>
<dbReference type="RefSeq" id="XP_001934171.1">
    <property type="nucleotide sequence ID" value="XM_001934136.1"/>
</dbReference>
<dbReference type="SMR" id="B2W340"/>
<dbReference type="FunCoup" id="B2W340">
    <property type="interactions" value="111"/>
</dbReference>
<dbReference type="STRING" id="426418.B2W340"/>
<dbReference type="ESTHER" id="pyrtr-kex1">
    <property type="family name" value="Carboxypeptidase_S10"/>
</dbReference>
<dbReference type="MEROPS" id="S10.007"/>
<dbReference type="GlyCosmos" id="B2W340">
    <property type="glycosylation" value="4 sites, No reported glycans"/>
</dbReference>
<dbReference type="EnsemblFungi" id="EDU46676">
    <property type="protein sequence ID" value="EDU46676"/>
    <property type="gene ID" value="PTRG_03838"/>
</dbReference>
<dbReference type="GeneID" id="6342074"/>
<dbReference type="KEGG" id="ptrr:6342074"/>
<dbReference type="eggNOG" id="KOG1282">
    <property type="taxonomic scope" value="Eukaryota"/>
</dbReference>
<dbReference type="HOGENOM" id="CLU_008523_11_0_1"/>
<dbReference type="InParanoid" id="B2W340"/>
<dbReference type="OMA" id="EMADQFV"/>
<dbReference type="OrthoDB" id="34201at28556"/>
<dbReference type="Proteomes" id="UP000001471">
    <property type="component" value="Unassembled WGS sequence"/>
</dbReference>
<dbReference type="GO" id="GO:0016020">
    <property type="term" value="C:membrane"/>
    <property type="evidence" value="ECO:0007669"/>
    <property type="project" value="UniProtKB-KW"/>
</dbReference>
<dbReference type="GO" id="GO:0005802">
    <property type="term" value="C:trans-Golgi network"/>
    <property type="evidence" value="ECO:0007669"/>
    <property type="project" value="TreeGrafter"/>
</dbReference>
<dbReference type="GO" id="GO:0004185">
    <property type="term" value="F:serine-type carboxypeptidase activity"/>
    <property type="evidence" value="ECO:0007669"/>
    <property type="project" value="UniProtKB-EC"/>
</dbReference>
<dbReference type="GO" id="GO:0006915">
    <property type="term" value="P:apoptotic process"/>
    <property type="evidence" value="ECO:0007669"/>
    <property type="project" value="UniProtKB-KW"/>
</dbReference>
<dbReference type="GO" id="GO:0006508">
    <property type="term" value="P:proteolysis"/>
    <property type="evidence" value="ECO:0007669"/>
    <property type="project" value="UniProtKB-KW"/>
</dbReference>
<dbReference type="FunFam" id="3.40.50.1820:FF:000121">
    <property type="entry name" value="Carboxypeptidase D"/>
    <property type="match status" value="1"/>
</dbReference>
<dbReference type="Gene3D" id="3.40.50.1820">
    <property type="entry name" value="alpha/beta hydrolase"/>
    <property type="match status" value="1"/>
</dbReference>
<dbReference type="InterPro" id="IPR029058">
    <property type="entry name" value="AB_hydrolase_fold"/>
</dbReference>
<dbReference type="InterPro" id="IPR001563">
    <property type="entry name" value="Peptidase_S10"/>
</dbReference>
<dbReference type="InterPro" id="IPR018202">
    <property type="entry name" value="Ser_caboxypep_ser_AS"/>
</dbReference>
<dbReference type="PANTHER" id="PTHR11802:SF190">
    <property type="entry name" value="PHEROMONE-PROCESSING CARBOXYPEPTIDASE KEX1"/>
    <property type="match status" value="1"/>
</dbReference>
<dbReference type="PANTHER" id="PTHR11802">
    <property type="entry name" value="SERINE PROTEASE FAMILY S10 SERINE CARBOXYPEPTIDASE"/>
    <property type="match status" value="1"/>
</dbReference>
<dbReference type="Pfam" id="PF00450">
    <property type="entry name" value="Peptidase_S10"/>
    <property type="match status" value="1"/>
</dbReference>
<dbReference type="PRINTS" id="PR00724">
    <property type="entry name" value="CRBOXYPTASEC"/>
</dbReference>
<dbReference type="SUPFAM" id="SSF53474">
    <property type="entry name" value="alpha/beta-Hydrolases"/>
    <property type="match status" value="1"/>
</dbReference>
<dbReference type="PROSITE" id="PS00131">
    <property type="entry name" value="CARBOXYPEPT_SER_SER"/>
    <property type="match status" value="1"/>
</dbReference>
<sequence>MAFSHAPSGWRTALLAGLIATVAWLPAIVAQEKTQADYFIHDLPGAPKPLLKMHAGHIEVDAEHNGNLFFWHYQNRHIADRQRTVLWLNGGPGCSSMDGAMMEIGPYRVREGGKLEYNNGSWDEFANLLFVDQPVGTGFSYVNTDSYLTELDQMAAHMVIFLEKWFALFPEYENDDLYIAGESYAGQHIPYIARAILDRNKKNQAKSPWPLKGLLIGNGWMSPVDQYLSYIPFAYQNGLMRSGTDMAKRVEEQQRICVQKLEAGGMDAVDTRDCEQIMVRILQETKNENADPMNQCLNMYDIRLRDDSSCGMNWPPDLAQVTPYLRRADVVQALHINTDKKTGWQECNGAVSSHFRAKNSKPSVKFLPEVIEQVPVLLFSGDKDFICNHVGTEAMIQNLQWNGGKGFEASPGVQNAKQDWMFEGEAAGTWQEARNLTYVVFYNSSHMVPFDYPRRTRDMLDRFMGVNIEAIGGAPADSLIDGEKGPLTSVGDHPNSTKAEEDKSKELKAAEWKAYTRSGEVALVIAVIVACICGFLLCRSRRAKSAYKGDDSDEGRESLLTGMGLDNFRRKERRQDVEAADFDERELDEVPKKSGKGYGQISSEKGRVPHNDSSFSLGVDSDDDEAGSSDRGRRKEESR</sequence>
<protein>
    <recommendedName>
        <fullName>Pheromone-processing carboxypeptidase kex1</fullName>
        <ecNumber>3.4.16.6</ecNumber>
    </recommendedName>
    <alternativeName>
        <fullName>Carboxypeptidase D</fullName>
    </alternativeName>
</protein>
<keyword id="KW-0053">Apoptosis</keyword>
<keyword id="KW-0121">Carboxypeptidase</keyword>
<keyword id="KW-0325">Glycoprotein</keyword>
<keyword id="KW-0333">Golgi apparatus</keyword>
<keyword id="KW-0378">Hydrolase</keyword>
<keyword id="KW-0472">Membrane</keyword>
<keyword id="KW-0645">Protease</keyword>
<keyword id="KW-1185">Reference proteome</keyword>
<keyword id="KW-0732">Signal</keyword>
<keyword id="KW-0812">Transmembrane</keyword>
<keyword id="KW-1133">Transmembrane helix</keyword>
<name>KEX1_PYRTR</name>
<evidence type="ECO:0000250" key="1"/>
<evidence type="ECO:0000255" key="2"/>
<evidence type="ECO:0000255" key="3">
    <source>
        <dbReference type="PROSITE-ProRule" id="PRU10074"/>
    </source>
</evidence>
<evidence type="ECO:0000256" key="4">
    <source>
        <dbReference type="SAM" id="MobiDB-lite"/>
    </source>
</evidence>
<evidence type="ECO:0000305" key="5"/>
<comment type="function">
    <text evidence="1">Protease with a carboxypeptidase B-like function involved in the C-terminal processing of the lysine and arginine residues from protein precursors. Promotes cell fusion and is involved in the programmed cell death (By similarity).</text>
</comment>
<comment type="catalytic activity">
    <reaction>
        <text>Preferential release of a C-terminal arginine or lysine residue.</text>
        <dbReference type="EC" id="3.4.16.6"/>
    </reaction>
</comment>
<comment type="subcellular location">
    <subcellularLocation>
        <location evidence="1">Golgi apparatus</location>
        <location evidence="1">trans-Golgi network membrane</location>
        <topology evidence="1">Single-pass type I membrane protein</topology>
    </subcellularLocation>
</comment>
<comment type="similarity">
    <text evidence="5">Belongs to the peptidase S10 family.</text>
</comment>
<feature type="signal peptide" evidence="2">
    <location>
        <begin position="1"/>
        <end position="30"/>
    </location>
</feature>
<feature type="chain" id="PRO_0000411943" description="Pheromone-processing carboxypeptidase kex1">
    <location>
        <begin position="31"/>
        <end position="639"/>
    </location>
</feature>
<feature type="topological domain" description="Lumenal" evidence="2">
    <location>
        <begin position="31"/>
        <end position="517"/>
    </location>
</feature>
<feature type="transmembrane region" description="Helical" evidence="2">
    <location>
        <begin position="518"/>
        <end position="538"/>
    </location>
</feature>
<feature type="topological domain" description="Cytoplasmic" evidence="2">
    <location>
        <begin position="539"/>
        <end position="639"/>
    </location>
</feature>
<feature type="region of interest" description="Disordered" evidence="4">
    <location>
        <begin position="477"/>
        <end position="504"/>
    </location>
</feature>
<feature type="region of interest" description="Disordered" evidence="4">
    <location>
        <begin position="580"/>
        <end position="639"/>
    </location>
</feature>
<feature type="compositionally biased region" description="Basic and acidic residues" evidence="4">
    <location>
        <begin position="628"/>
        <end position="639"/>
    </location>
</feature>
<feature type="active site" evidence="3">
    <location>
        <position position="183"/>
    </location>
</feature>
<feature type="active site" evidence="3">
    <location>
        <position position="384"/>
    </location>
</feature>
<feature type="active site" evidence="3">
    <location>
        <position position="446"/>
    </location>
</feature>
<feature type="glycosylation site" description="N-linked (GlcNAc...) asparagine" evidence="2">
    <location>
        <position position="119"/>
    </location>
</feature>
<feature type="glycosylation site" description="N-linked (GlcNAc...) asparagine" evidence="2">
    <location>
        <position position="435"/>
    </location>
</feature>
<feature type="glycosylation site" description="N-linked (GlcNAc...) asparagine" evidence="2">
    <location>
        <position position="443"/>
    </location>
</feature>
<feature type="glycosylation site" description="N-linked (GlcNAc...) asparagine" evidence="2">
    <location>
        <position position="495"/>
    </location>
</feature>
<proteinExistence type="inferred from homology"/>
<gene>
    <name type="primary">kex1</name>
    <name type="ORF">PTRG_03838</name>
</gene>
<organism>
    <name type="scientific">Pyrenophora tritici-repentis (strain Pt-1C-BFP)</name>
    <name type="common">Wheat tan spot fungus</name>
    <name type="synonym">Drechslera tritici-repentis</name>
    <dbReference type="NCBI Taxonomy" id="426418"/>
    <lineage>
        <taxon>Eukaryota</taxon>
        <taxon>Fungi</taxon>
        <taxon>Dikarya</taxon>
        <taxon>Ascomycota</taxon>
        <taxon>Pezizomycotina</taxon>
        <taxon>Dothideomycetes</taxon>
        <taxon>Pleosporomycetidae</taxon>
        <taxon>Pleosporales</taxon>
        <taxon>Pleosporineae</taxon>
        <taxon>Pleosporaceae</taxon>
        <taxon>Pyrenophora</taxon>
    </lineage>
</organism>
<reference key="1">
    <citation type="journal article" date="2013" name="G3 (Bethesda)">
        <title>Comparative genomics of a plant-pathogenic fungus, Pyrenophora tritici-repentis, reveals transduplication and the impact of repeat elements on pathogenicity and population divergence.</title>
        <authorList>
            <person name="Manning V.A."/>
            <person name="Pandelova I."/>
            <person name="Dhillon B."/>
            <person name="Wilhelm L.J."/>
            <person name="Goodwin S.B."/>
            <person name="Berlin A.M."/>
            <person name="Figueroa M."/>
            <person name="Freitag M."/>
            <person name="Hane J.K."/>
            <person name="Henrissat B."/>
            <person name="Holman W.H."/>
            <person name="Kodira C.D."/>
            <person name="Martin J."/>
            <person name="Oliver R.P."/>
            <person name="Robbertse B."/>
            <person name="Schackwitz W."/>
            <person name="Schwartz D.C."/>
            <person name="Spatafora J.W."/>
            <person name="Turgeon B.G."/>
            <person name="Yandava C."/>
            <person name="Young S."/>
            <person name="Zhou S."/>
            <person name="Zeng Q."/>
            <person name="Grigoriev I.V."/>
            <person name="Ma L.-J."/>
            <person name="Ciuffetti L.M."/>
        </authorList>
    </citation>
    <scope>NUCLEOTIDE SEQUENCE [LARGE SCALE GENOMIC DNA]</scope>
    <source>
        <strain>Pt-1C-BFP</strain>
    </source>
</reference>
<accession>B2W340</accession>